<sequence length="102" mass="11214">MGTASDAAALVTRLVRVRGRVQGIGYREACVRRARALGVTGWVRNRMDASVEAMLQGLPLQLEAMCAWLDEGMPAALVEGMEVIEVPAPFPRFDRFEQLPTL</sequence>
<protein>
    <recommendedName>
        <fullName>Acylphosphatase 1</fullName>
        <ecNumber>3.6.1.7</ecNumber>
    </recommendedName>
    <alternativeName>
        <fullName>Acylphosphate phosphohydrolase 1</fullName>
    </alternativeName>
</protein>
<dbReference type="EC" id="3.6.1.7"/>
<dbReference type="EMBL" id="AL646052">
    <property type="protein sequence ID" value="CAD13747.1"/>
    <property type="status" value="ALT_INIT"/>
    <property type="molecule type" value="Genomic_DNA"/>
</dbReference>
<dbReference type="RefSeq" id="WP_011000186.1">
    <property type="nucleotide sequence ID" value="NC_003295.1"/>
</dbReference>
<dbReference type="SMR" id="Q8Y2W3"/>
<dbReference type="STRING" id="267608.RSc0219"/>
<dbReference type="EnsemblBacteria" id="CAD13747">
    <property type="protein sequence ID" value="CAD13747"/>
    <property type="gene ID" value="RSc0219"/>
</dbReference>
<dbReference type="KEGG" id="rso:RSc0219"/>
<dbReference type="PATRIC" id="fig|267608.8.peg.223"/>
<dbReference type="eggNOG" id="COG1254">
    <property type="taxonomic scope" value="Bacteria"/>
</dbReference>
<dbReference type="HOGENOM" id="CLU_141932_3_1_4"/>
<dbReference type="Proteomes" id="UP000001436">
    <property type="component" value="Chromosome"/>
</dbReference>
<dbReference type="GO" id="GO:0003998">
    <property type="term" value="F:acylphosphatase activity"/>
    <property type="evidence" value="ECO:0007669"/>
    <property type="project" value="UniProtKB-EC"/>
</dbReference>
<dbReference type="Gene3D" id="3.30.70.100">
    <property type="match status" value="1"/>
</dbReference>
<dbReference type="InterPro" id="IPR020456">
    <property type="entry name" value="Acylphosphatase"/>
</dbReference>
<dbReference type="InterPro" id="IPR001792">
    <property type="entry name" value="Acylphosphatase-like_dom"/>
</dbReference>
<dbReference type="InterPro" id="IPR036046">
    <property type="entry name" value="Acylphosphatase-like_dom_sf"/>
</dbReference>
<dbReference type="PANTHER" id="PTHR47268">
    <property type="entry name" value="ACYLPHOSPHATASE"/>
    <property type="match status" value="1"/>
</dbReference>
<dbReference type="PANTHER" id="PTHR47268:SF4">
    <property type="entry name" value="ACYLPHOSPHATASE"/>
    <property type="match status" value="1"/>
</dbReference>
<dbReference type="Pfam" id="PF00708">
    <property type="entry name" value="Acylphosphatase"/>
    <property type="match status" value="1"/>
</dbReference>
<dbReference type="PRINTS" id="PR00112">
    <property type="entry name" value="ACYLPHPHTASE"/>
</dbReference>
<dbReference type="SUPFAM" id="SSF54975">
    <property type="entry name" value="Acylphosphatase/BLUF domain-like"/>
    <property type="match status" value="1"/>
</dbReference>
<dbReference type="PROSITE" id="PS51160">
    <property type="entry name" value="ACYLPHOSPHATASE_3"/>
    <property type="match status" value="1"/>
</dbReference>
<accession>Q8Y2W3</accession>
<keyword id="KW-0378">Hydrolase</keyword>
<keyword id="KW-1185">Reference proteome</keyword>
<organism>
    <name type="scientific">Ralstonia nicotianae (strain ATCC BAA-1114 / GMI1000)</name>
    <name type="common">Ralstonia solanacearum</name>
    <dbReference type="NCBI Taxonomy" id="267608"/>
    <lineage>
        <taxon>Bacteria</taxon>
        <taxon>Pseudomonadati</taxon>
        <taxon>Pseudomonadota</taxon>
        <taxon>Betaproteobacteria</taxon>
        <taxon>Burkholderiales</taxon>
        <taxon>Burkholderiaceae</taxon>
        <taxon>Ralstonia</taxon>
        <taxon>Ralstonia solanacearum species complex</taxon>
    </lineage>
</organism>
<proteinExistence type="inferred from homology"/>
<name>ACYP1_RALN1</name>
<comment type="catalytic activity">
    <reaction>
        <text>an acyl phosphate + H2O = a carboxylate + phosphate + H(+)</text>
        <dbReference type="Rhea" id="RHEA:14965"/>
        <dbReference type="ChEBI" id="CHEBI:15377"/>
        <dbReference type="ChEBI" id="CHEBI:15378"/>
        <dbReference type="ChEBI" id="CHEBI:29067"/>
        <dbReference type="ChEBI" id="CHEBI:43474"/>
        <dbReference type="ChEBI" id="CHEBI:59918"/>
        <dbReference type="EC" id="3.6.1.7"/>
    </reaction>
</comment>
<comment type="similarity">
    <text evidence="2">Belongs to the acylphosphatase family.</text>
</comment>
<comment type="sequence caution" evidence="2">
    <conflict type="erroneous initiation">
        <sequence resource="EMBL-CDS" id="CAD13747"/>
    </conflict>
</comment>
<gene>
    <name type="primary">acyP1</name>
    <name type="ordered locus">RSc0219</name>
</gene>
<reference key="1">
    <citation type="journal article" date="2002" name="Nature">
        <title>Genome sequence of the plant pathogen Ralstonia solanacearum.</title>
        <authorList>
            <person name="Salanoubat M."/>
            <person name="Genin S."/>
            <person name="Artiguenave F."/>
            <person name="Gouzy J."/>
            <person name="Mangenot S."/>
            <person name="Arlat M."/>
            <person name="Billault A."/>
            <person name="Brottier P."/>
            <person name="Camus J.-C."/>
            <person name="Cattolico L."/>
            <person name="Chandler M."/>
            <person name="Choisne N."/>
            <person name="Claudel-Renard C."/>
            <person name="Cunnac S."/>
            <person name="Demange N."/>
            <person name="Gaspin C."/>
            <person name="Lavie M."/>
            <person name="Moisan A."/>
            <person name="Robert C."/>
            <person name="Saurin W."/>
            <person name="Schiex T."/>
            <person name="Siguier P."/>
            <person name="Thebault P."/>
            <person name="Whalen M."/>
            <person name="Wincker P."/>
            <person name="Levy M."/>
            <person name="Weissenbach J."/>
            <person name="Boucher C.A."/>
        </authorList>
    </citation>
    <scope>NUCLEOTIDE SEQUENCE [LARGE SCALE GENOMIC DNA]</scope>
    <source>
        <strain>ATCC BAA-1114 / GMI1000</strain>
    </source>
</reference>
<feature type="chain" id="PRO_0000326778" description="Acylphosphatase 1">
    <location>
        <begin position="1"/>
        <end position="102"/>
    </location>
</feature>
<feature type="domain" description="Acylphosphatase-like" evidence="1">
    <location>
        <begin position="12"/>
        <end position="100"/>
    </location>
</feature>
<feature type="active site" evidence="1">
    <location>
        <position position="27"/>
    </location>
</feature>
<feature type="active site" evidence="1">
    <location>
        <position position="45"/>
    </location>
</feature>
<evidence type="ECO:0000255" key="1">
    <source>
        <dbReference type="PROSITE-ProRule" id="PRU00520"/>
    </source>
</evidence>
<evidence type="ECO:0000305" key="2"/>